<organism>
    <name type="scientific">Homo sapiens</name>
    <name type="common">Human</name>
    <dbReference type="NCBI Taxonomy" id="9606"/>
    <lineage>
        <taxon>Eukaryota</taxon>
        <taxon>Metazoa</taxon>
        <taxon>Chordata</taxon>
        <taxon>Craniata</taxon>
        <taxon>Vertebrata</taxon>
        <taxon>Euteleostomi</taxon>
        <taxon>Mammalia</taxon>
        <taxon>Eutheria</taxon>
        <taxon>Euarchontoglires</taxon>
        <taxon>Primates</taxon>
        <taxon>Haplorrhini</taxon>
        <taxon>Catarrhini</taxon>
        <taxon>Hominidae</taxon>
        <taxon>Homo</taxon>
    </lineage>
</organism>
<sequence length="247" mass="25959">MGTSSTDSQQAGHRRCSTSNTSAENLTCLSLPGSPGKTAPLPGPAQAGAGQPLPKGCAAVKAEVGIPAPHTSQEVRIHIRRLLSWAAPGACGLRSTPCALPQALPQARPCPGRWFFPGCSLPTGGAQTILSLWTWRHFLNWALQQREENSGRARRVPPVPRTAPVSKGEGSHPPQNSNGEKVKTITPDVGLHQSLTSDPTVAVLRAKRAPEAHPPRSCSGSLTARVCHMGVCQGQGDTEDGRMTLMG</sequence>
<reference key="1">
    <citation type="journal article" date="2006" name="Bone">
        <title>Molecular cloning, expression and immunolocalization of a novel human cementum-derived protein (CP-23).</title>
        <authorList>
            <person name="Alvarez-Perez M.A."/>
            <person name="Narayanan S."/>
            <person name="Zeichner-David M."/>
            <person name="Rodriguez Carmona B."/>
            <person name="Arzate H."/>
        </authorList>
    </citation>
    <scope>NUCLEOTIDE SEQUENCE [MRNA]</scope>
    <scope>SUBCELLULAR LOCATION</scope>
    <scope>TISSUE SPECIFICITY</scope>
    <source>
        <tissue>Cementoblast</tissue>
    </source>
</reference>
<reference key="2">
    <citation type="journal article" date="2004" name="Genome Res.">
        <title>The status, quality, and expansion of the NIH full-length cDNA project: the Mammalian Gene Collection (MGC).</title>
        <authorList>
            <consortium name="The MGC Project Team"/>
        </authorList>
    </citation>
    <scope>NUCLEOTIDE SEQUENCE [LARGE SCALE MRNA]</scope>
    <source>
        <tissue>Brain</tissue>
    </source>
</reference>
<reference key="3">
    <citation type="journal article" date="2007" name="Biochem. Biophys. Res. Commun.">
        <title>Human cementum protein 1 induces expression of bone and cementum proteins by human gingival fibroblasts.</title>
        <authorList>
            <person name="Carmona-Rodriguez B."/>
            <person name="Alvarez-Perez M.A."/>
            <person name="Narayanan A.S."/>
            <person name="Zeichner-David M."/>
            <person name="Reyes-Gasga J."/>
            <person name="Molina-Guarneros J."/>
            <person name="Garcia-Hernandez A.L."/>
            <person name="Suarez-Franco J.L."/>
            <person name="Chavarria I.G."/>
            <person name="Villarreal-Ramirez E."/>
            <person name="Arzate H."/>
        </authorList>
    </citation>
    <scope>FUNCTION</scope>
</reference>
<reference key="4">
    <citation type="journal article" date="2009" name="Biochem. Biophys. Res. Commun.">
        <title>Characterization of recombinant human cementum protein 1 (hrCEMP1): primary role in biomineralization.</title>
        <authorList>
            <person name="Villarreal-Ramirez E."/>
            <person name="Moreno A."/>
            <person name="Mas-Oliva J."/>
            <person name="Chavez-Pacheco J.L."/>
            <person name="Narayanan A.S."/>
            <person name="Gil-Chavarria I."/>
            <person name="Zeichner-David M."/>
            <person name="Arzate H."/>
        </authorList>
    </citation>
    <scope>FUNCTION</scope>
    <scope>GLYCOSYLATION</scope>
    <scope>PHOSPHORYLATION</scope>
</reference>
<reference key="5">
    <citation type="journal article" date="2012" name="Cell Biol. Int.">
        <title>Cementum protein 1 (CEMP1) induces differentiation by human periodontal ligament cells under three-dimensional culture conditions.</title>
        <authorList>
            <person name="Hoz L."/>
            <person name="Romo E."/>
            <person name="Zeichner-David M."/>
            <person name="Sanz M."/>
            <person name="Nunez J."/>
            <person name="Gaitan L."/>
            <person name="Mercado G."/>
            <person name="Arzate H."/>
        </authorList>
    </citation>
    <scope>FUNCTION</scope>
</reference>
<reference key="6">
    <citation type="journal article" date="2012" name="J. Cell. Physiol.">
        <title>Cementum protein 1 (CEMP1) induces a cementoblastic phenotype and reduces osteoblastic differentiation in periodontal ligament cells.</title>
        <authorList>
            <person name="Komaki M."/>
            <person name="Iwasaki K."/>
            <person name="Arzate H."/>
            <person name="Narayanan A.S."/>
            <person name="Izumi Y."/>
            <person name="Morita I."/>
        </authorList>
    </citation>
    <scope>FUNCTION</scope>
    <scope>SUBCELLULAR LOCATION</scope>
    <scope>TISSUE SPECIFICITY</scope>
</reference>
<reference key="7">
    <citation type="journal article" date="2014" name="Tissue Eng. Part A">
        <title>Hypoxia promotes CEMP1 expression and induces cementoblastic differentiation of human dental stem cells in an HIF-1-dependent manner.</title>
        <authorList>
            <person name="Choi H."/>
            <person name="Jin H."/>
            <person name="Kim J.Y."/>
            <person name="Lim K.T."/>
            <person name="Choung H.W."/>
            <person name="Park J.Y."/>
            <person name="Chung J.H."/>
            <person name="Choung P.H."/>
        </authorList>
    </citation>
    <scope>INDUCTION BY HYPOXIA</scope>
</reference>
<reference key="8">
    <citation type="journal article" date="2015" name="PLoS ONE">
        <title>CEMP1 induces transformation in human gingival fibroblasts.</title>
        <authorList>
            <person name="Bermudez M."/>
            <person name="Imaz-Rosshandler I."/>
            <person name="Rangel-Escareno C."/>
            <person name="Zeichner-David M."/>
            <person name="Arzate H."/>
            <person name="Mercado-Celis G.E."/>
        </authorList>
    </citation>
    <scope>FUNCTION</scope>
</reference>
<keyword id="KW-0002">3D-structure</keyword>
<keyword id="KW-0963">Cytoplasm</keyword>
<keyword id="KW-0221">Differentiation</keyword>
<keyword id="KW-0539">Nucleus</keyword>
<keyword id="KW-1185">Reference proteome</keyword>
<evidence type="ECO:0000256" key="1">
    <source>
        <dbReference type="SAM" id="MobiDB-lite"/>
    </source>
</evidence>
<evidence type="ECO:0000269" key="2">
    <source>
    </source>
</evidence>
<evidence type="ECO:0000269" key="3">
    <source>
    </source>
</evidence>
<evidence type="ECO:0000269" key="4">
    <source>
    </source>
</evidence>
<evidence type="ECO:0000269" key="5">
    <source>
    </source>
</evidence>
<evidence type="ECO:0000269" key="6">
    <source>
    </source>
</evidence>
<evidence type="ECO:0000269" key="7">
    <source>
    </source>
</evidence>
<evidence type="ECO:0000269" key="8">
    <source>
    </source>
</evidence>
<evidence type="ECO:0000303" key="9">
    <source>
    </source>
</evidence>
<evidence type="ECO:0000303" key="10">
    <source>
    </source>
</evidence>
<evidence type="ECO:0000305" key="11"/>
<evidence type="ECO:0000312" key="12">
    <source>
        <dbReference type="HGNC" id="HGNC:32553"/>
    </source>
</evidence>
<evidence type="ECO:0007829" key="13">
    <source>
        <dbReference type="PDB" id="7TB9"/>
    </source>
</evidence>
<gene>
    <name evidence="12" type="primary">CEMP1</name>
</gene>
<accession>Q6PRD7</accession>
<accession>B2RUY1</accession>
<feature type="chain" id="PRO_0000264475" description="Cementoblastoma-derived protein 1">
    <location>
        <begin position="1"/>
        <end position="247"/>
    </location>
</feature>
<feature type="region of interest" description="Disordered" evidence="1">
    <location>
        <begin position="1"/>
        <end position="52"/>
    </location>
</feature>
<feature type="region of interest" description="Disordered" evidence="1">
    <location>
        <begin position="147"/>
        <end position="183"/>
    </location>
</feature>
<feature type="compositionally biased region" description="Polar residues" evidence="1">
    <location>
        <begin position="1"/>
        <end position="28"/>
    </location>
</feature>
<feature type="sequence variant" id="VAR_050792" description="In dbSNP:rs13331643.">
    <original>K</original>
    <variation>E</variation>
    <location>
        <position position="55"/>
    </location>
</feature>
<feature type="helix" evidence="13">
    <location>
        <begin position="8"/>
        <end position="11"/>
    </location>
</feature>
<name>CEMP1_HUMAN</name>
<comment type="function">
    <text evidence="3 4 5 6 8">May play a role in development of the periodontium which surrounds and supports the teeth by promoting the differentiation of multi-potent cells from the periodontal ligament into cementoblasts to form the cementum (PubMed:17509525, PubMed:21465469, PubMed:21929512). Binds hydroxyapatite and may promote the biomineralization of the cementum (PubMed:19393626). Also promotes cell proliferation (PubMed:17509525, PubMed:21929512, PubMed:26011628).</text>
</comment>
<comment type="interaction">
    <interactant intactId="EBI-12907646">
        <id>Q6PRD7</id>
    </interactant>
    <interactant intactId="EBI-10242151">
        <id>Q53EP0-3</id>
        <label>FNDC3B</label>
    </interactant>
    <organismsDiffer>false</organismsDiffer>
    <experiments>3</experiments>
</comment>
<comment type="interaction">
    <interactant intactId="EBI-12907646">
        <id>Q6PRD7</id>
    </interactant>
    <interactant intactId="EBI-11747707">
        <id>B2RUY7</id>
        <label>VWC2L</label>
    </interactant>
    <organismsDiffer>false</organismsDiffer>
    <experiments>3</experiments>
</comment>
<comment type="subcellular location">
    <subcellularLocation>
        <location evidence="2 5">Cytoplasm</location>
    </subcellularLocation>
    <subcellularLocation>
        <location evidence="5">Nucleus</location>
    </subcellularLocation>
    <text evidence="5">Localizes to the nucleus of some cementoblasts.</text>
</comment>
<comment type="tissue specificity">
    <text evidence="2 5">Expressed by cementoblasts, a subpopulation of periodontal ligament cells and cells located around vessels in periodontium (at protein level).</text>
</comment>
<comment type="induction">
    <text evidence="7">Up-regulated by hypoxia (at protein level).</text>
</comment>
<comment type="PTM">
    <text evidence="4">Phosphorylated.</text>
</comment>
<comment type="PTM">
    <text evidence="4">N-glycosylated.</text>
</comment>
<protein>
    <recommendedName>
        <fullName evidence="11">Cementoblastoma-derived protein 1</fullName>
    </recommendedName>
    <alternativeName>
        <fullName evidence="10">Cementum protein 1</fullName>
    </alternativeName>
    <alternativeName>
        <fullName evidence="9">Cementum protein 23</fullName>
        <shortName evidence="9">CP-23</shortName>
    </alternativeName>
</protein>
<dbReference type="EMBL" id="AY584596">
    <property type="protein sequence ID" value="AAT01221.1"/>
    <property type="molecule type" value="mRNA"/>
</dbReference>
<dbReference type="EMBL" id="BC146925">
    <property type="protein sequence ID" value="AAI46926.1"/>
    <property type="molecule type" value="mRNA"/>
</dbReference>
<dbReference type="EMBL" id="BC146926">
    <property type="protein sequence ID" value="AAI46927.1"/>
    <property type="molecule type" value="mRNA"/>
</dbReference>
<dbReference type="CCDS" id="CCDS42108.1"/>
<dbReference type="RefSeq" id="NP_001041677.1">
    <property type="nucleotide sequence ID" value="NM_001048212.3"/>
</dbReference>
<dbReference type="PDB" id="7TB9">
    <property type="method" value="NMR"/>
    <property type="chains" value="A=1-20"/>
</dbReference>
<dbReference type="PDBsum" id="7TB9"/>
<dbReference type="SMR" id="Q6PRD7"/>
<dbReference type="BioGRID" id="612783">
    <property type="interactions" value="7"/>
</dbReference>
<dbReference type="FunCoup" id="Q6PRD7">
    <property type="interactions" value="25"/>
</dbReference>
<dbReference type="IntAct" id="Q6PRD7">
    <property type="interactions" value="5"/>
</dbReference>
<dbReference type="STRING" id="9606.ENSP00000457380"/>
<dbReference type="iPTMnet" id="Q6PRD7"/>
<dbReference type="PhosphoSitePlus" id="Q6PRD7"/>
<dbReference type="BioMuta" id="CEMP1"/>
<dbReference type="DMDM" id="74709987"/>
<dbReference type="MassIVE" id="Q6PRD7"/>
<dbReference type="PaxDb" id="9606-ENSP00000457380"/>
<dbReference type="Antibodypedia" id="57697">
    <property type="antibodies" value="28 antibodies from 12 providers"/>
</dbReference>
<dbReference type="DNASU" id="752014"/>
<dbReference type="Ensembl" id="ENST00000567119.1">
    <property type="protein sequence ID" value="ENSP00000457380.1"/>
    <property type="gene ID" value="ENSG00000205923.3"/>
</dbReference>
<dbReference type="GeneID" id="752014"/>
<dbReference type="KEGG" id="hsa:752014"/>
<dbReference type="MANE-Select" id="ENST00000567119.1">
    <property type="protein sequence ID" value="ENSP00000457380.1"/>
    <property type="RefSeq nucleotide sequence ID" value="NM_001048212.3"/>
    <property type="RefSeq protein sequence ID" value="NP_001041677.1"/>
</dbReference>
<dbReference type="UCSC" id="uc002cqr.3">
    <property type="organism name" value="human"/>
</dbReference>
<dbReference type="AGR" id="HGNC:32553"/>
<dbReference type="CTD" id="752014"/>
<dbReference type="DisGeNET" id="752014"/>
<dbReference type="GeneCards" id="CEMP1"/>
<dbReference type="HGNC" id="HGNC:32553">
    <property type="gene designation" value="CEMP1"/>
</dbReference>
<dbReference type="HPA" id="ENSG00000205923">
    <property type="expression patterns" value="Low tissue specificity"/>
</dbReference>
<dbReference type="MIM" id="611113">
    <property type="type" value="gene"/>
</dbReference>
<dbReference type="neXtProt" id="NX_Q6PRD7"/>
<dbReference type="OpenTargets" id="ENSG00000205923"/>
<dbReference type="PharmGKB" id="PA162382169"/>
<dbReference type="VEuPathDB" id="HostDB:ENSG00000205923"/>
<dbReference type="eggNOG" id="ENOG502TEMU">
    <property type="taxonomic scope" value="Eukaryota"/>
</dbReference>
<dbReference type="GeneTree" id="ENSGT01130000278738"/>
<dbReference type="HOGENOM" id="CLU_1124235_0_0_1"/>
<dbReference type="InParanoid" id="Q6PRD7"/>
<dbReference type="OMA" id="WTWRHFL"/>
<dbReference type="OrthoDB" id="9535411at2759"/>
<dbReference type="PAN-GO" id="Q6PRD7">
    <property type="GO annotations" value="2 GO annotations based on evolutionary models"/>
</dbReference>
<dbReference type="PhylomeDB" id="Q6PRD7"/>
<dbReference type="TreeFam" id="TF343729"/>
<dbReference type="PathwayCommons" id="Q6PRD7"/>
<dbReference type="SignaLink" id="Q6PRD7"/>
<dbReference type="BioGRID-ORCS" id="752014">
    <property type="hits" value="12 hits in 1115 CRISPR screens"/>
</dbReference>
<dbReference type="ChiTaRS" id="CEMP1">
    <property type="organism name" value="human"/>
</dbReference>
<dbReference type="GenomeRNAi" id="752014"/>
<dbReference type="Pharos" id="Q6PRD7">
    <property type="development level" value="Tbio"/>
</dbReference>
<dbReference type="PRO" id="PR:Q6PRD7"/>
<dbReference type="Proteomes" id="UP000005640">
    <property type="component" value="Chromosome 16"/>
</dbReference>
<dbReference type="RNAct" id="Q6PRD7">
    <property type="molecule type" value="protein"/>
</dbReference>
<dbReference type="Bgee" id="ENSG00000205923">
    <property type="expression patterns" value="Expressed in mucosa of transverse colon and 116 other cell types or tissues"/>
</dbReference>
<dbReference type="ExpressionAtlas" id="Q6PRD7">
    <property type="expression patterns" value="baseline and differential"/>
</dbReference>
<dbReference type="GO" id="GO:0005737">
    <property type="term" value="C:cytoplasm"/>
    <property type="evidence" value="ECO:0000314"/>
    <property type="project" value="UniProtKB"/>
</dbReference>
<dbReference type="GO" id="GO:0005654">
    <property type="term" value="C:nucleoplasm"/>
    <property type="evidence" value="ECO:0000314"/>
    <property type="project" value="HPA"/>
</dbReference>
<dbReference type="GO" id="GO:0005634">
    <property type="term" value="C:nucleus"/>
    <property type="evidence" value="ECO:0000314"/>
    <property type="project" value="UniProtKB"/>
</dbReference>
<dbReference type="GO" id="GO:0046848">
    <property type="term" value="F:hydroxyapatite binding"/>
    <property type="evidence" value="ECO:0000314"/>
    <property type="project" value="UniProtKB"/>
</dbReference>
<dbReference type="GO" id="GO:0031214">
    <property type="term" value="P:biomineral tissue development"/>
    <property type="evidence" value="ECO:0000314"/>
    <property type="project" value="UniProtKB"/>
</dbReference>
<dbReference type="GO" id="GO:0030154">
    <property type="term" value="P:cell differentiation"/>
    <property type="evidence" value="ECO:0000315"/>
    <property type="project" value="UniProtKB"/>
</dbReference>
<dbReference type="GO" id="GO:0008283">
    <property type="term" value="P:cell population proliferation"/>
    <property type="evidence" value="ECO:0000314"/>
    <property type="project" value="UniProtKB"/>
</dbReference>
<dbReference type="GO" id="GO:0042476">
    <property type="term" value="P:odontogenesis"/>
    <property type="evidence" value="ECO:0000314"/>
    <property type="project" value="UniProtKB"/>
</dbReference>
<proteinExistence type="evidence at protein level"/>